<dbReference type="EMBL" id="CP000880">
    <property type="protein sequence ID" value="ABX21499.1"/>
    <property type="molecule type" value="Genomic_DNA"/>
</dbReference>
<dbReference type="SMR" id="A9MEP2"/>
<dbReference type="STRING" id="41514.SARI_01605"/>
<dbReference type="KEGG" id="ses:SARI_01605"/>
<dbReference type="HOGENOM" id="CLU_124502_1_1_6"/>
<dbReference type="UniPathway" id="UPA00266"/>
<dbReference type="Proteomes" id="UP000002084">
    <property type="component" value="Chromosome"/>
</dbReference>
<dbReference type="GO" id="GO:0005737">
    <property type="term" value="C:cytoplasm"/>
    <property type="evidence" value="ECO:0007669"/>
    <property type="project" value="UniProtKB-SubCell"/>
</dbReference>
<dbReference type="GO" id="GO:0016226">
    <property type="term" value="P:iron-sulfur cluster assembly"/>
    <property type="evidence" value="ECO:0007669"/>
    <property type="project" value="InterPro"/>
</dbReference>
<dbReference type="GO" id="GO:0006790">
    <property type="term" value="P:sulfur compound metabolic process"/>
    <property type="evidence" value="ECO:0007669"/>
    <property type="project" value="InterPro"/>
</dbReference>
<dbReference type="Gene3D" id="3.90.1010.10">
    <property type="match status" value="1"/>
</dbReference>
<dbReference type="HAMAP" id="MF_01832">
    <property type="entry name" value="SufE"/>
    <property type="match status" value="1"/>
</dbReference>
<dbReference type="InterPro" id="IPR023939">
    <property type="entry name" value="Cysteine_desulfuration_SufE"/>
</dbReference>
<dbReference type="InterPro" id="IPR003808">
    <property type="entry name" value="Fe-S_metab-assoc_dom"/>
</dbReference>
<dbReference type="NCBIfam" id="NF006792">
    <property type="entry name" value="PRK09296.1"/>
    <property type="match status" value="1"/>
</dbReference>
<dbReference type="PANTHER" id="PTHR43597:SF3">
    <property type="entry name" value="CYSTEINE DESULFURATION PROTEIN SUFE"/>
    <property type="match status" value="1"/>
</dbReference>
<dbReference type="PANTHER" id="PTHR43597">
    <property type="entry name" value="SULFUR ACCEPTOR PROTEIN CSDE"/>
    <property type="match status" value="1"/>
</dbReference>
<dbReference type="Pfam" id="PF02657">
    <property type="entry name" value="SufE"/>
    <property type="match status" value="1"/>
</dbReference>
<dbReference type="SUPFAM" id="SSF82649">
    <property type="entry name" value="SufE/NifU"/>
    <property type="match status" value="1"/>
</dbReference>
<evidence type="ECO:0000255" key="1">
    <source>
        <dbReference type="HAMAP-Rule" id="MF_01832"/>
    </source>
</evidence>
<feature type="chain" id="PRO_1000088436" description="Cysteine desulfuration protein SufE">
    <location>
        <begin position="1"/>
        <end position="138"/>
    </location>
</feature>
<feature type="active site" description="Cysteine persulfide intermediate" evidence="1">
    <location>
        <position position="51"/>
    </location>
</feature>
<proteinExistence type="inferred from homology"/>
<keyword id="KW-0963">Cytoplasm</keyword>
<keyword id="KW-1185">Reference proteome</keyword>
<comment type="function">
    <text evidence="1">Participates in cysteine desulfuration mediated by SufS. Cysteine desulfuration mobilizes sulfur from L-cysteine to yield L-alanine and constitutes an essential step in sulfur metabolism for biosynthesis of a variety of sulfur-containing biomolecules. Functions as a sulfur acceptor for SufS, by mediating the direct transfer of the sulfur atom from the S-sulfanylcysteine of SufS, an intermediate product of cysteine desulfuration process.</text>
</comment>
<comment type="pathway">
    <text evidence="1">Cofactor biosynthesis; iron-sulfur cluster biosynthesis.</text>
</comment>
<comment type="subunit">
    <text evidence="1">Homodimer. Interacts with SufS.</text>
</comment>
<comment type="subcellular location">
    <subcellularLocation>
        <location evidence="1">Cytoplasm</location>
    </subcellularLocation>
</comment>
<comment type="similarity">
    <text evidence="1">Belongs to the SufE family.</text>
</comment>
<gene>
    <name evidence="1" type="primary">sufE</name>
    <name type="ordered locus">SARI_01605</name>
</gene>
<name>SUFE_SALAR</name>
<protein>
    <recommendedName>
        <fullName evidence="1">Cysteine desulfuration protein SufE</fullName>
    </recommendedName>
</protein>
<reference key="1">
    <citation type="submission" date="2007-11" db="EMBL/GenBank/DDBJ databases">
        <authorList>
            <consortium name="The Salmonella enterica serovar Arizonae Genome Sequencing Project"/>
            <person name="McClelland M."/>
            <person name="Sanderson E.K."/>
            <person name="Porwollik S."/>
            <person name="Spieth J."/>
            <person name="Clifton W.S."/>
            <person name="Fulton R."/>
            <person name="Chunyan W."/>
            <person name="Wollam A."/>
            <person name="Shah N."/>
            <person name="Pepin K."/>
            <person name="Bhonagiri V."/>
            <person name="Nash W."/>
            <person name="Johnson M."/>
            <person name="Thiruvilangam P."/>
            <person name="Wilson R."/>
        </authorList>
    </citation>
    <scope>NUCLEOTIDE SEQUENCE [LARGE SCALE GENOMIC DNA]</scope>
    <source>
        <strain>ATCC BAA-731 / CDC346-86 / RSK2980</strain>
    </source>
</reference>
<accession>A9MEP2</accession>
<organism>
    <name type="scientific">Salmonella arizonae (strain ATCC BAA-731 / CDC346-86 / RSK2980)</name>
    <dbReference type="NCBI Taxonomy" id="41514"/>
    <lineage>
        <taxon>Bacteria</taxon>
        <taxon>Pseudomonadati</taxon>
        <taxon>Pseudomonadota</taxon>
        <taxon>Gammaproteobacteria</taxon>
        <taxon>Enterobacterales</taxon>
        <taxon>Enterobacteriaceae</taxon>
        <taxon>Salmonella</taxon>
    </lineage>
</organism>
<sequence length="138" mass="15719">MAALPDKEKLLRNFTRCANWEEKYLYIIDLGQRLAELNTQDRNPQNRIQGCQSQVWIVIGRNADGIIELQGDSDAAIVKGLMAVVFILYHHMTAQDIVHFDVRPWFEKMALTQHLTPSRSQGLEAMIRAIRAKAATLS</sequence>